<sequence length="103" mass="11196">MIVTTTSTIQGKEIIEYIDIVNGEAIMGANIVRDLFASVRDVVGGRAGAYESKLKEARDIAMEEMKTFARQKNANAIVGIDVDYEVVREGMLMVAVSGTAVRI</sequence>
<accession>Q72XT9</accession>
<feature type="chain" id="PRO_0000225803" description="UPF0145 protein BCE_5284">
    <location>
        <begin position="1"/>
        <end position="103"/>
    </location>
</feature>
<proteinExistence type="inferred from homology"/>
<reference key="1">
    <citation type="journal article" date="2004" name="Nucleic Acids Res.">
        <title>The genome sequence of Bacillus cereus ATCC 10987 reveals metabolic adaptations and a large plasmid related to Bacillus anthracis pXO1.</title>
        <authorList>
            <person name="Rasko D.A."/>
            <person name="Ravel J."/>
            <person name="Oekstad O.A."/>
            <person name="Helgason E."/>
            <person name="Cer R.Z."/>
            <person name="Jiang L."/>
            <person name="Shores K.A."/>
            <person name="Fouts D.E."/>
            <person name="Tourasse N.J."/>
            <person name="Angiuoli S.V."/>
            <person name="Kolonay J.F."/>
            <person name="Nelson W.C."/>
            <person name="Kolstoe A.-B."/>
            <person name="Fraser C.M."/>
            <person name="Read T.D."/>
        </authorList>
    </citation>
    <scope>NUCLEOTIDE SEQUENCE [LARGE SCALE GENOMIC DNA]</scope>
    <source>
        <strain>ATCC 10987 / NRS 248</strain>
    </source>
</reference>
<comment type="similarity">
    <text evidence="1">Belongs to the UPF0145 family.</text>
</comment>
<gene>
    <name type="ordered locus">BCE_5284</name>
</gene>
<protein>
    <recommendedName>
        <fullName evidence="1">UPF0145 protein BCE_5284</fullName>
    </recommendedName>
</protein>
<organism>
    <name type="scientific">Bacillus cereus (strain ATCC 10987 / NRS 248)</name>
    <dbReference type="NCBI Taxonomy" id="222523"/>
    <lineage>
        <taxon>Bacteria</taxon>
        <taxon>Bacillati</taxon>
        <taxon>Bacillota</taxon>
        <taxon>Bacilli</taxon>
        <taxon>Bacillales</taxon>
        <taxon>Bacillaceae</taxon>
        <taxon>Bacillus</taxon>
        <taxon>Bacillus cereus group</taxon>
    </lineage>
</organism>
<evidence type="ECO:0000255" key="1">
    <source>
        <dbReference type="HAMAP-Rule" id="MF_00338"/>
    </source>
</evidence>
<dbReference type="EMBL" id="AE017194">
    <property type="protein sequence ID" value="AAS44185.1"/>
    <property type="molecule type" value="Genomic_DNA"/>
</dbReference>
<dbReference type="SMR" id="Q72XT9"/>
<dbReference type="KEGG" id="bca:BCE_5284"/>
<dbReference type="HOGENOM" id="CLU_117144_3_2_9"/>
<dbReference type="Proteomes" id="UP000002527">
    <property type="component" value="Chromosome"/>
</dbReference>
<dbReference type="Gene3D" id="3.30.110.70">
    <property type="entry name" value="Hypothetical protein apc22750. Chain B"/>
    <property type="match status" value="1"/>
</dbReference>
<dbReference type="HAMAP" id="MF_00338">
    <property type="entry name" value="UPF0145"/>
    <property type="match status" value="1"/>
</dbReference>
<dbReference type="InterPro" id="IPR035439">
    <property type="entry name" value="UPF0145_dom_sf"/>
</dbReference>
<dbReference type="InterPro" id="IPR002765">
    <property type="entry name" value="UPF0145_YbjQ-like"/>
</dbReference>
<dbReference type="NCBIfam" id="NF009495">
    <property type="entry name" value="PRK12855.1"/>
    <property type="match status" value="1"/>
</dbReference>
<dbReference type="NCBIfam" id="NF009496">
    <property type="entry name" value="PRK12856.1"/>
    <property type="match status" value="1"/>
</dbReference>
<dbReference type="PANTHER" id="PTHR34068">
    <property type="entry name" value="UPF0145 PROTEIN YBJQ"/>
    <property type="match status" value="1"/>
</dbReference>
<dbReference type="PANTHER" id="PTHR34068:SF1">
    <property type="entry name" value="UPF0145 PROTEIN YBJQ"/>
    <property type="match status" value="1"/>
</dbReference>
<dbReference type="Pfam" id="PF01906">
    <property type="entry name" value="YbjQ_1"/>
    <property type="match status" value="1"/>
</dbReference>
<dbReference type="SUPFAM" id="SSF117782">
    <property type="entry name" value="YbjQ-like"/>
    <property type="match status" value="1"/>
</dbReference>
<name>YGI4_BACC1</name>